<gene>
    <name type="primary">NAD10</name>
</gene>
<dbReference type="EC" id="7.1.1.2"/>
<dbReference type="EMBL" id="AF007261">
    <property type="protein sequence ID" value="AAD11899.1"/>
    <property type="molecule type" value="Genomic_DNA"/>
</dbReference>
<dbReference type="PIR" id="S78166">
    <property type="entry name" value="S78166"/>
</dbReference>
<dbReference type="RefSeq" id="NP_044784.1">
    <property type="nucleotide sequence ID" value="NC_001823.1"/>
</dbReference>
<dbReference type="SMR" id="O21272"/>
<dbReference type="GeneID" id="801085"/>
<dbReference type="GO" id="GO:0005739">
    <property type="term" value="C:mitochondrion"/>
    <property type="evidence" value="ECO:0007669"/>
    <property type="project" value="UniProtKB-SubCell"/>
</dbReference>
<dbReference type="GO" id="GO:0045271">
    <property type="term" value="C:respiratory chain complex I"/>
    <property type="evidence" value="ECO:0007669"/>
    <property type="project" value="TreeGrafter"/>
</dbReference>
<dbReference type="GO" id="GO:0051539">
    <property type="term" value="F:4 iron, 4 sulfur cluster binding"/>
    <property type="evidence" value="ECO:0007669"/>
    <property type="project" value="UniProtKB-KW"/>
</dbReference>
<dbReference type="GO" id="GO:0046872">
    <property type="term" value="F:metal ion binding"/>
    <property type="evidence" value="ECO:0007669"/>
    <property type="project" value="UniProtKB-KW"/>
</dbReference>
<dbReference type="GO" id="GO:0008137">
    <property type="term" value="F:NADH dehydrogenase (ubiquinone) activity"/>
    <property type="evidence" value="ECO:0007669"/>
    <property type="project" value="UniProtKB-EC"/>
</dbReference>
<dbReference type="GO" id="GO:0048038">
    <property type="term" value="F:quinone binding"/>
    <property type="evidence" value="ECO:0007669"/>
    <property type="project" value="InterPro"/>
</dbReference>
<dbReference type="GO" id="GO:0009060">
    <property type="term" value="P:aerobic respiration"/>
    <property type="evidence" value="ECO:0007669"/>
    <property type="project" value="TreeGrafter"/>
</dbReference>
<dbReference type="GO" id="GO:0015990">
    <property type="term" value="P:electron transport coupled proton transport"/>
    <property type="evidence" value="ECO:0007669"/>
    <property type="project" value="TreeGrafter"/>
</dbReference>
<dbReference type="GO" id="GO:0032981">
    <property type="term" value="P:mitochondrial respiratory chain complex I assembly"/>
    <property type="evidence" value="ECO:0007669"/>
    <property type="project" value="TreeGrafter"/>
</dbReference>
<dbReference type="FunFam" id="3.40.50.12280:FF:000001">
    <property type="entry name" value="NADH-quinone oxidoreductase subunit B 2"/>
    <property type="match status" value="1"/>
</dbReference>
<dbReference type="Gene3D" id="3.40.50.12280">
    <property type="match status" value="1"/>
</dbReference>
<dbReference type="HAMAP" id="MF_01356">
    <property type="entry name" value="NDH1_NuoB"/>
    <property type="match status" value="1"/>
</dbReference>
<dbReference type="InterPro" id="IPR006137">
    <property type="entry name" value="NADH_UbQ_OxRdtase-like_20kDa"/>
</dbReference>
<dbReference type="InterPro" id="IPR006138">
    <property type="entry name" value="NADH_UQ_OxRdtase_20Kd_su"/>
</dbReference>
<dbReference type="NCBIfam" id="TIGR01957">
    <property type="entry name" value="nuoB_fam"/>
    <property type="match status" value="1"/>
</dbReference>
<dbReference type="NCBIfam" id="NF005012">
    <property type="entry name" value="PRK06411.1"/>
    <property type="match status" value="1"/>
</dbReference>
<dbReference type="PANTHER" id="PTHR11995">
    <property type="entry name" value="NADH DEHYDROGENASE"/>
    <property type="match status" value="1"/>
</dbReference>
<dbReference type="PANTHER" id="PTHR11995:SF14">
    <property type="entry name" value="NADH DEHYDROGENASE [UBIQUINONE] IRON-SULFUR PROTEIN 7, MITOCHONDRIAL"/>
    <property type="match status" value="1"/>
</dbReference>
<dbReference type="Pfam" id="PF01058">
    <property type="entry name" value="Oxidored_q6"/>
    <property type="match status" value="1"/>
</dbReference>
<dbReference type="SUPFAM" id="SSF56770">
    <property type="entry name" value="HydA/Nqo6-like"/>
    <property type="match status" value="1"/>
</dbReference>
<dbReference type="PROSITE" id="PS01150">
    <property type="entry name" value="COMPLEX1_20K"/>
    <property type="match status" value="1"/>
</dbReference>
<sequence length="182" mass="20925">MEERCFRLGIKTNYKKEIFMILNNKQNKTEFIVSKMDELVNWARKGSLWPMTFGLACCAVEMMHSAASRYDLDRFGIIFRPSPRQSDVMIVAGTLTNKMAPALRKVYDQMSEPRWVVSMGSCANGGGYYHYSYSVVRGCDRIVPVDIYVPGCPPTAEALLYGLLQLQKKIKRSRKTLYWLQK</sequence>
<proteinExistence type="inferred from homology"/>
<feature type="chain" id="PRO_0000118740" description="NADH-ubiquinone oxidoreductase 20 kDa subunit">
    <location>
        <begin position="1"/>
        <end position="182"/>
    </location>
</feature>
<feature type="binding site" evidence="1">
    <location>
        <position position="57"/>
    </location>
    <ligand>
        <name>[4Fe-4S] cluster</name>
        <dbReference type="ChEBI" id="CHEBI:49883"/>
    </ligand>
</feature>
<feature type="binding site" evidence="1">
    <location>
        <position position="58"/>
    </location>
    <ligand>
        <name>[4Fe-4S] cluster</name>
        <dbReference type="ChEBI" id="CHEBI:49883"/>
    </ligand>
</feature>
<feature type="binding site" evidence="1">
    <location>
        <position position="122"/>
    </location>
    <ligand>
        <name>[4Fe-4S] cluster</name>
        <dbReference type="ChEBI" id="CHEBI:49883"/>
    </ligand>
</feature>
<feature type="binding site" evidence="1">
    <location>
        <position position="152"/>
    </location>
    <ligand>
        <name>[4Fe-4S] cluster</name>
        <dbReference type="ChEBI" id="CHEBI:49883"/>
    </ligand>
</feature>
<accession>O21272</accession>
<comment type="catalytic activity">
    <reaction>
        <text>a ubiquinone + NADH + 5 H(+)(in) = a ubiquinol + NAD(+) + 4 H(+)(out)</text>
        <dbReference type="Rhea" id="RHEA:29091"/>
        <dbReference type="Rhea" id="RHEA-COMP:9565"/>
        <dbReference type="Rhea" id="RHEA-COMP:9566"/>
        <dbReference type="ChEBI" id="CHEBI:15378"/>
        <dbReference type="ChEBI" id="CHEBI:16389"/>
        <dbReference type="ChEBI" id="CHEBI:17976"/>
        <dbReference type="ChEBI" id="CHEBI:57540"/>
        <dbReference type="ChEBI" id="CHEBI:57945"/>
        <dbReference type="EC" id="7.1.1.2"/>
    </reaction>
</comment>
<comment type="cofactor">
    <cofactor evidence="2">
        <name>[4Fe-4S] cluster</name>
        <dbReference type="ChEBI" id="CHEBI:49883"/>
    </cofactor>
    <text evidence="2">Binds 1 [4Fe-4S] cluster.</text>
</comment>
<comment type="subcellular location">
    <subcellularLocation>
        <location>Mitochondrion</location>
    </subcellularLocation>
</comment>
<comment type="similarity">
    <text evidence="2">Belongs to the complex I 20 kDa subunit family.</text>
</comment>
<geneLocation type="mitochondrion"/>
<evidence type="ECO:0000255" key="1"/>
<evidence type="ECO:0000305" key="2"/>
<keyword id="KW-0004">4Fe-4S</keyword>
<keyword id="KW-0249">Electron transport</keyword>
<keyword id="KW-0408">Iron</keyword>
<keyword id="KW-0411">Iron-sulfur</keyword>
<keyword id="KW-0479">Metal-binding</keyword>
<keyword id="KW-0496">Mitochondrion</keyword>
<keyword id="KW-0520">NAD</keyword>
<keyword id="KW-0560">Oxidoreductase</keyword>
<keyword id="KW-0679">Respiratory chain</keyword>
<keyword id="KW-1278">Translocase</keyword>
<keyword id="KW-0813">Transport</keyword>
<reference key="1">
    <citation type="journal article" date="1997" name="Nature">
        <title>An ancestral mitochondrial DNA resembling a eubacterial genome in miniature.</title>
        <authorList>
            <person name="Lang B.F."/>
            <person name="Burger G."/>
            <person name="O'Kelly C.J."/>
            <person name="Cedergren R."/>
            <person name="Golding G.B."/>
            <person name="Lemieux C."/>
            <person name="Sankoff D."/>
            <person name="Turmel M."/>
            <person name="Gray M.W."/>
        </authorList>
    </citation>
    <scope>NUCLEOTIDE SEQUENCE [GENOMIC DNA]</scope>
    <source>
        <strain>ATCC 50394</strain>
    </source>
</reference>
<name>NDUS7_RECAM</name>
<organism>
    <name type="scientific">Reclinomonas americana</name>
    <dbReference type="NCBI Taxonomy" id="48483"/>
    <lineage>
        <taxon>Eukaryota</taxon>
        <taxon>Discoba</taxon>
        <taxon>Jakobida</taxon>
        <taxon>Histionina</taxon>
        <taxon>Histionidae</taxon>
        <taxon>Reclinomonas</taxon>
    </lineage>
</organism>
<protein>
    <recommendedName>
        <fullName>NADH-ubiquinone oxidoreductase 20 kDa subunit</fullName>
        <ecNumber>7.1.1.2</ecNumber>
    </recommendedName>
    <alternativeName>
        <fullName>NADH dehydrogenase subunit 10</fullName>
    </alternativeName>
</protein>